<keyword id="KW-0963">Cytoplasm</keyword>
<keyword id="KW-0521">NADP</keyword>
<keyword id="KW-0560">Oxidoreductase</keyword>
<keyword id="KW-0671">Queuosine biosynthesis</keyword>
<keyword id="KW-1185">Reference proteome</keyword>
<comment type="function">
    <text evidence="1">Catalyzes the NADPH-dependent reduction of 7-cyano-7-deazaguanine (preQ0) to 7-aminomethyl-7-deazaguanine (preQ1).</text>
</comment>
<comment type="catalytic activity">
    <reaction evidence="1">
        <text>7-aminomethyl-7-carbaguanine + 2 NADP(+) = 7-cyano-7-deazaguanine + 2 NADPH + 3 H(+)</text>
        <dbReference type="Rhea" id="RHEA:13409"/>
        <dbReference type="ChEBI" id="CHEBI:15378"/>
        <dbReference type="ChEBI" id="CHEBI:45075"/>
        <dbReference type="ChEBI" id="CHEBI:57783"/>
        <dbReference type="ChEBI" id="CHEBI:58349"/>
        <dbReference type="ChEBI" id="CHEBI:58703"/>
        <dbReference type="EC" id="1.7.1.13"/>
    </reaction>
</comment>
<comment type="pathway">
    <text evidence="1">tRNA modification; tRNA-queuosine biosynthesis.</text>
</comment>
<comment type="subcellular location">
    <subcellularLocation>
        <location evidence="1">Cytoplasm</location>
    </subcellularLocation>
</comment>
<comment type="similarity">
    <text evidence="1">Belongs to the GTP cyclohydrolase I family. QueF type 1 subfamily.</text>
</comment>
<accession>B9JZM8</accession>
<evidence type="ECO:0000255" key="1">
    <source>
        <dbReference type="HAMAP-Rule" id="MF_00818"/>
    </source>
</evidence>
<evidence type="ECO:0000256" key="2">
    <source>
        <dbReference type="SAM" id="MobiDB-lite"/>
    </source>
</evidence>
<organism>
    <name type="scientific">Allorhizobium ampelinum (strain ATCC BAA-846 / DSM 112012 / S4)</name>
    <name type="common">Agrobacterium vitis (strain S4)</name>
    <dbReference type="NCBI Taxonomy" id="311402"/>
    <lineage>
        <taxon>Bacteria</taxon>
        <taxon>Pseudomonadati</taxon>
        <taxon>Pseudomonadota</taxon>
        <taxon>Alphaproteobacteria</taxon>
        <taxon>Hyphomicrobiales</taxon>
        <taxon>Rhizobiaceae</taxon>
        <taxon>Rhizobium/Agrobacterium group</taxon>
        <taxon>Allorhizobium</taxon>
        <taxon>Allorhizobium ampelinum</taxon>
    </lineage>
</organism>
<name>QUEF_ALLAM</name>
<sequence length="154" mass="17223">MSKTDVSGLSQLGRQVDAPTSPETAVLERVPNTNAGTDYVVRFTAPEFTSLCPMTGQPDFAHIVIDYIPGDFLVESKSLKLFMTSFRNHGSFHEDCSIYIAKRLVDLLDPKWLRIGAYWYPRGGIPIDVFWQTGEVPKGVWLPDQGVPTYRGRG</sequence>
<proteinExistence type="inferred from homology"/>
<protein>
    <recommendedName>
        <fullName evidence="1">NADPH-dependent 7-cyano-7-deazaguanine reductase</fullName>
        <ecNumber evidence="1">1.7.1.13</ecNumber>
    </recommendedName>
    <alternativeName>
        <fullName evidence="1">7-cyano-7-carbaguanine reductase</fullName>
    </alternativeName>
    <alternativeName>
        <fullName evidence="1">NADPH-dependent nitrile oxidoreductase</fullName>
    </alternativeName>
    <alternativeName>
        <fullName evidence="1">PreQ(0) reductase</fullName>
    </alternativeName>
</protein>
<dbReference type="EC" id="1.7.1.13" evidence="1"/>
<dbReference type="EMBL" id="CP000633">
    <property type="protein sequence ID" value="ACM37338.1"/>
    <property type="molecule type" value="Genomic_DNA"/>
</dbReference>
<dbReference type="RefSeq" id="WP_015916757.1">
    <property type="nucleotide sequence ID" value="NC_011989.1"/>
</dbReference>
<dbReference type="SMR" id="B9JZM8"/>
<dbReference type="STRING" id="311402.Avi_3262"/>
<dbReference type="KEGG" id="avi:Avi_3262"/>
<dbReference type="eggNOG" id="COG0780">
    <property type="taxonomic scope" value="Bacteria"/>
</dbReference>
<dbReference type="HOGENOM" id="CLU_102489_0_1_5"/>
<dbReference type="UniPathway" id="UPA00392"/>
<dbReference type="Proteomes" id="UP000001596">
    <property type="component" value="Chromosome 1"/>
</dbReference>
<dbReference type="GO" id="GO:0005737">
    <property type="term" value="C:cytoplasm"/>
    <property type="evidence" value="ECO:0007669"/>
    <property type="project" value="UniProtKB-SubCell"/>
</dbReference>
<dbReference type="GO" id="GO:0033739">
    <property type="term" value="F:preQ1 synthase activity"/>
    <property type="evidence" value="ECO:0007669"/>
    <property type="project" value="UniProtKB-UniRule"/>
</dbReference>
<dbReference type="GO" id="GO:0008616">
    <property type="term" value="P:queuosine biosynthetic process"/>
    <property type="evidence" value="ECO:0007669"/>
    <property type="project" value="UniProtKB-UniRule"/>
</dbReference>
<dbReference type="GO" id="GO:0006400">
    <property type="term" value="P:tRNA modification"/>
    <property type="evidence" value="ECO:0007669"/>
    <property type="project" value="UniProtKB-UniRule"/>
</dbReference>
<dbReference type="Gene3D" id="3.30.1130.10">
    <property type="match status" value="1"/>
</dbReference>
<dbReference type="HAMAP" id="MF_00818">
    <property type="entry name" value="QueF_type1"/>
    <property type="match status" value="1"/>
</dbReference>
<dbReference type="InterPro" id="IPR043133">
    <property type="entry name" value="GTP-CH-I_C/QueF"/>
</dbReference>
<dbReference type="InterPro" id="IPR050084">
    <property type="entry name" value="NADPH_dep_7-cyano-7-deazaG_red"/>
</dbReference>
<dbReference type="InterPro" id="IPR029500">
    <property type="entry name" value="QueF"/>
</dbReference>
<dbReference type="InterPro" id="IPR016856">
    <property type="entry name" value="QueF_type1"/>
</dbReference>
<dbReference type="NCBIfam" id="TIGR03139">
    <property type="entry name" value="QueF-II"/>
    <property type="match status" value="1"/>
</dbReference>
<dbReference type="PANTHER" id="PTHR34354">
    <property type="entry name" value="NADPH-DEPENDENT 7-CYANO-7-DEAZAGUANINE REDUCTASE"/>
    <property type="match status" value="1"/>
</dbReference>
<dbReference type="PANTHER" id="PTHR34354:SF1">
    <property type="entry name" value="NADPH-DEPENDENT 7-CYANO-7-DEAZAGUANINE REDUCTASE"/>
    <property type="match status" value="1"/>
</dbReference>
<dbReference type="Pfam" id="PF14489">
    <property type="entry name" value="QueF"/>
    <property type="match status" value="1"/>
</dbReference>
<dbReference type="SUPFAM" id="SSF55620">
    <property type="entry name" value="Tetrahydrobiopterin biosynthesis enzymes-like"/>
    <property type="match status" value="1"/>
</dbReference>
<gene>
    <name evidence="1" type="primary">queF</name>
    <name type="ordered locus">Avi_3262</name>
</gene>
<feature type="chain" id="PRO_1000148660" description="NADPH-dependent 7-cyano-7-deazaguanine reductase">
    <location>
        <begin position="1"/>
        <end position="154"/>
    </location>
</feature>
<feature type="region of interest" description="Disordered" evidence="2">
    <location>
        <begin position="1"/>
        <end position="24"/>
    </location>
</feature>
<feature type="compositionally biased region" description="Polar residues" evidence="2">
    <location>
        <begin position="1"/>
        <end position="13"/>
    </location>
</feature>
<feature type="active site" description="Thioimide intermediate" evidence="1">
    <location>
        <position position="52"/>
    </location>
</feature>
<feature type="active site" description="Proton donor" evidence="1">
    <location>
        <position position="59"/>
    </location>
</feature>
<feature type="binding site" evidence="1">
    <location>
        <begin position="74"/>
        <end position="76"/>
    </location>
    <ligand>
        <name>substrate</name>
    </ligand>
</feature>
<feature type="binding site" evidence="1">
    <location>
        <begin position="93"/>
        <end position="94"/>
    </location>
    <ligand>
        <name>substrate</name>
    </ligand>
</feature>
<reference key="1">
    <citation type="journal article" date="2009" name="J. Bacteriol.">
        <title>Genome sequences of three Agrobacterium biovars help elucidate the evolution of multichromosome genomes in bacteria.</title>
        <authorList>
            <person name="Slater S.C."/>
            <person name="Goldman B.S."/>
            <person name="Goodner B."/>
            <person name="Setubal J.C."/>
            <person name="Farrand S.K."/>
            <person name="Nester E.W."/>
            <person name="Burr T.J."/>
            <person name="Banta L."/>
            <person name="Dickerman A.W."/>
            <person name="Paulsen I."/>
            <person name="Otten L."/>
            <person name="Suen G."/>
            <person name="Welch R."/>
            <person name="Almeida N.F."/>
            <person name="Arnold F."/>
            <person name="Burton O.T."/>
            <person name="Du Z."/>
            <person name="Ewing A."/>
            <person name="Godsy E."/>
            <person name="Heisel S."/>
            <person name="Houmiel K.L."/>
            <person name="Jhaveri J."/>
            <person name="Lu J."/>
            <person name="Miller N.M."/>
            <person name="Norton S."/>
            <person name="Chen Q."/>
            <person name="Phoolcharoen W."/>
            <person name="Ohlin V."/>
            <person name="Ondrusek D."/>
            <person name="Pride N."/>
            <person name="Stricklin S.L."/>
            <person name="Sun J."/>
            <person name="Wheeler C."/>
            <person name="Wilson L."/>
            <person name="Zhu H."/>
            <person name="Wood D.W."/>
        </authorList>
    </citation>
    <scope>NUCLEOTIDE SEQUENCE [LARGE SCALE GENOMIC DNA]</scope>
    <source>
        <strain>ATCC BAA-846 / DSM 112012 / S4</strain>
    </source>
</reference>